<gene>
    <name evidence="5" type="primary">ndfl-4</name>
    <name evidence="5" type="synonym">nd4l</name>
    <name evidence="5" type="ORF">MTCE.4</name>
</gene>
<name>NU4LM_CAEEL</name>
<comment type="function">
    <text evidence="1">Core subunit of the mitochondrial membrane respiratory chain NADH dehydrogenase (Complex I) that is believed to belong to the minimal assembly required for catalysis. Complex I functions in the transfer of electrons from NADH to the respiratory chain. The immediate electron acceptor for the enzyme is believed to be ubiquinone (By similarity).</text>
</comment>
<comment type="catalytic activity">
    <reaction>
        <text>a ubiquinone + NADH + 5 H(+)(in) = a ubiquinol + NAD(+) + 4 H(+)(out)</text>
        <dbReference type="Rhea" id="RHEA:29091"/>
        <dbReference type="Rhea" id="RHEA-COMP:9565"/>
        <dbReference type="Rhea" id="RHEA-COMP:9566"/>
        <dbReference type="ChEBI" id="CHEBI:15378"/>
        <dbReference type="ChEBI" id="CHEBI:16389"/>
        <dbReference type="ChEBI" id="CHEBI:17976"/>
        <dbReference type="ChEBI" id="CHEBI:57540"/>
        <dbReference type="ChEBI" id="CHEBI:57945"/>
        <dbReference type="EC" id="7.1.1.2"/>
    </reaction>
</comment>
<comment type="subcellular location">
    <subcellularLocation>
        <location evidence="1">Mitochondrion membrane</location>
        <topology evidence="1">Multi-pass membrane protein</topology>
    </subcellularLocation>
</comment>
<comment type="similarity">
    <text evidence="4">Belongs to the complex I subunit 4L family.</text>
</comment>
<sequence length="77" mass="9249">MMFLFVSLFMFIFKWQRLIFILISLEFMMLSLFLKFSYVLGEMMFFYFMCFSVISSILGMVVMVGNMKFFGSDNCIF</sequence>
<proteinExistence type="inferred from homology"/>
<reference key="1">
    <citation type="journal article" date="2003" name="Mol. Biol. Evol.">
        <title>Phylogenetics in Caenorhabditis elegans: an analysis of divergence and outcrossing.</title>
        <authorList>
            <person name="Denver D.R."/>
            <person name="Morris K."/>
            <person name="Thomas W.K."/>
        </authorList>
    </citation>
    <scope>NUCLEOTIDE SEQUENCE [GENOMIC DNA]</scope>
    <scope>VARIANTS SER-41 AND LEU-70</scope>
    <source>
        <strain>AB1</strain>
        <strain>AB2</strain>
        <strain>Bristol N2</strain>
        <strain>CB4852</strain>
        <strain>CB4853</strain>
        <strain>CB4854</strain>
        <strain>CB4855</strain>
        <strain>CB4856</strain>
        <strain>CB4857</strain>
        <strain>CB4858</strain>
        <strain>KR314</strain>
        <strain>PB303</strain>
        <strain>PB306</strain>
        <strain>RW7000</strain>
        <strain>TR403</strain>
    </source>
</reference>
<reference key="2">
    <citation type="journal article" date="1992" name="Genetics">
        <title>The mitochondrial genomes of two nematodes, Caenorhabditis elegans and Ascaris suum.</title>
        <authorList>
            <person name="Okimoto R."/>
            <person name="Macfarlane J.L."/>
            <person name="Clary D.O."/>
            <person name="Wolstenholme D.R."/>
        </authorList>
    </citation>
    <scope>NUCLEOTIDE SEQUENCE [LARGE SCALE GENOMIC DNA]</scope>
    <source>
        <strain>Bristol N2</strain>
    </source>
</reference>
<keyword id="KW-0249">Electron transport</keyword>
<keyword id="KW-0472">Membrane</keyword>
<keyword id="KW-0496">Mitochondrion</keyword>
<keyword id="KW-0520">NAD</keyword>
<keyword id="KW-1185">Reference proteome</keyword>
<keyword id="KW-0679">Respiratory chain</keyword>
<keyword id="KW-1278">Translocase</keyword>
<keyword id="KW-0812">Transmembrane</keyword>
<keyword id="KW-1133">Transmembrane helix</keyword>
<keyword id="KW-0813">Transport</keyword>
<keyword id="KW-0830">Ubiquinone</keyword>
<dbReference type="EC" id="7.1.1.2"/>
<dbReference type="EMBL" id="AY171133">
    <property type="protein sequence ID" value="AAO16386.1"/>
    <property type="molecule type" value="Genomic_DNA"/>
</dbReference>
<dbReference type="EMBL" id="AY171134">
    <property type="protein sequence ID" value="AAO16389.1"/>
    <property type="molecule type" value="Genomic_DNA"/>
</dbReference>
<dbReference type="EMBL" id="AY171135">
    <property type="protein sequence ID" value="AAO16392.1"/>
    <property type="molecule type" value="Genomic_DNA"/>
</dbReference>
<dbReference type="EMBL" id="AY171136">
    <property type="protein sequence ID" value="AAO16395.1"/>
    <property type="molecule type" value="Genomic_DNA"/>
</dbReference>
<dbReference type="EMBL" id="AY171137">
    <property type="protein sequence ID" value="AAO16398.1"/>
    <property type="molecule type" value="Genomic_DNA"/>
</dbReference>
<dbReference type="EMBL" id="AY171138">
    <property type="protein sequence ID" value="AAO16401.1"/>
    <property type="molecule type" value="Genomic_DNA"/>
</dbReference>
<dbReference type="EMBL" id="AY171139">
    <property type="protein sequence ID" value="AAO16404.1"/>
    <property type="molecule type" value="Genomic_DNA"/>
</dbReference>
<dbReference type="EMBL" id="AY171140">
    <property type="protein sequence ID" value="AAO16407.1"/>
    <property type="molecule type" value="Genomic_DNA"/>
</dbReference>
<dbReference type="EMBL" id="AY171141">
    <property type="protein sequence ID" value="AAO16410.1"/>
    <property type="molecule type" value="Genomic_DNA"/>
</dbReference>
<dbReference type="EMBL" id="AY171142">
    <property type="protein sequence ID" value="AAO16413.1"/>
    <property type="molecule type" value="Genomic_DNA"/>
</dbReference>
<dbReference type="EMBL" id="AY171143">
    <property type="protein sequence ID" value="AAO16416.1"/>
    <property type="molecule type" value="Genomic_DNA"/>
</dbReference>
<dbReference type="EMBL" id="AY171144">
    <property type="protein sequence ID" value="AAO16419.1"/>
    <property type="molecule type" value="Genomic_DNA"/>
</dbReference>
<dbReference type="EMBL" id="AY171145">
    <property type="protein sequence ID" value="AAO16422.1"/>
    <property type="molecule type" value="Genomic_DNA"/>
</dbReference>
<dbReference type="EMBL" id="AY171146">
    <property type="protein sequence ID" value="AAO16425.1"/>
    <property type="molecule type" value="Genomic_DNA"/>
</dbReference>
<dbReference type="EMBL" id="AY171147">
    <property type="protein sequence ID" value="AAO16428.1"/>
    <property type="molecule type" value="Genomic_DNA"/>
</dbReference>
<dbReference type="EMBL" id="X54252">
    <property type="status" value="NOT_ANNOTATED_CDS"/>
    <property type="molecule type" value="Genomic_DNA"/>
</dbReference>
<dbReference type="PIR" id="S26027">
    <property type="entry name" value="S26027"/>
</dbReference>
<dbReference type="RefSeq" id="NP_006954.1">
    <property type="nucleotide sequence ID" value="NC_001328.1"/>
</dbReference>
<dbReference type="SMR" id="P24886"/>
<dbReference type="BioGRID" id="57532">
    <property type="interactions" value="1"/>
</dbReference>
<dbReference type="FunCoup" id="P24886">
    <property type="interactions" value="107"/>
</dbReference>
<dbReference type="STRING" id="6239.MTCE.4.1"/>
<dbReference type="PaxDb" id="6239-MTCE.4"/>
<dbReference type="GeneID" id="2565694"/>
<dbReference type="KEGG" id="cel:KEF34_p11"/>
<dbReference type="AGR" id="WB:WBGene00010958"/>
<dbReference type="CTD" id="4539"/>
<dbReference type="WormBase" id="MTCE.4">
    <property type="protein sequence ID" value="CE35354"/>
    <property type="gene ID" value="WBGene00010958"/>
    <property type="gene designation" value="ndfl-4"/>
</dbReference>
<dbReference type="HOGENOM" id="CLU_2640347_0_0_1"/>
<dbReference type="InParanoid" id="P24886"/>
<dbReference type="PRO" id="PR:P24886"/>
<dbReference type="Proteomes" id="UP000001940">
    <property type="component" value="Mitochondrion"/>
</dbReference>
<dbReference type="GO" id="GO:0031966">
    <property type="term" value="C:mitochondrial membrane"/>
    <property type="evidence" value="ECO:0007669"/>
    <property type="project" value="UniProtKB-SubCell"/>
</dbReference>
<dbReference type="GO" id="GO:0045271">
    <property type="term" value="C:respiratory chain complex I"/>
    <property type="evidence" value="ECO:0000250"/>
    <property type="project" value="WormBase"/>
</dbReference>
<dbReference type="GO" id="GO:0008137">
    <property type="term" value="F:NADH dehydrogenase (ubiquinone) activity"/>
    <property type="evidence" value="ECO:0000303"/>
    <property type="project" value="UniProtKB"/>
</dbReference>
<dbReference type="GO" id="GO:0006120">
    <property type="term" value="P:mitochondrial electron transport, NADH to ubiquinone"/>
    <property type="evidence" value="ECO:0000303"/>
    <property type="project" value="UniProtKB"/>
</dbReference>
<dbReference type="FunFam" id="1.10.287.3510:FF:000008">
    <property type="entry name" value="NADH dehydrogenase subunit 4L"/>
    <property type="match status" value="1"/>
</dbReference>
<dbReference type="Gene3D" id="1.10.287.3510">
    <property type="match status" value="1"/>
</dbReference>
<evidence type="ECO:0000250" key="1"/>
<evidence type="ECO:0000255" key="2"/>
<evidence type="ECO:0000269" key="3">
    <source>
    </source>
</evidence>
<evidence type="ECO:0000305" key="4"/>
<evidence type="ECO:0000312" key="5">
    <source>
        <dbReference type="WormBase" id="MTCE.4"/>
    </source>
</evidence>
<accession>P24886</accession>
<organism>
    <name type="scientific">Caenorhabditis elegans</name>
    <dbReference type="NCBI Taxonomy" id="6239"/>
    <lineage>
        <taxon>Eukaryota</taxon>
        <taxon>Metazoa</taxon>
        <taxon>Ecdysozoa</taxon>
        <taxon>Nematoda</taxon>
        <taxon>Chromadorea</taxon>
        <taxon>Rhabditida</taxon>
        <taxon>Rhabditina</taxon>
        <taxon>Rhabditomorpha</taxon>
        <taxon>Rhabditoidea</taxon>
        <taxon>Rhabditidae</taxon>
        <taxon>Peloderinae</taxon>
        <taxon>Caenorhabditis</taxon>
    </lineage>
</organism>
<geneLocation type="mitochondrion"/>
<protein>
    <recommendedName>
        <fullName>NADH-ubiquinone oxidoreductase chain 4L</fullName>
        <ecNumber>7.1.1.2</ecNumber>
    </recommendedName>
    <alternativeName>
        <fullName>NADH dehydrogenase subunit 4L</fullName>
    </alternativeName>
</protein>
<feature type="chain" id="PRO_0000118401" description="NADH-ubiquinone oxidoreductase chain 4L">
    <location>
        <begin position="1"/>
        <end position="77"/>
    </location>
</feature>
<feature type="transmembrane region" description="Helical" evidence="2">
    <location>
        <begin position="15"/>
        <end position="37"/>
    </location>
</feature>
<feature type="transmembrane region" description="Helical" evidence="2">
    <location>
        <begin position="44"/>
        <end position="64"/>
    </location>
</feature>
<feature type="sequence variant" description="In strain: PB303." evidence="3">
    <original>G</original>
    <variation>S</variation>
    <location>
        <position position="41"/>
    </location>
</feature>
<feature type="sequence variant" description="In strain: CB4855." evidence="3">
    <original>F</original>
    <variation>L</variation>
    <location>
        <position position="70"/>
    </location>
</feature>